<protein>
    <recommendedName>
        <fullName evidence="1">Ribosomal RNA large subunit methyltransferase K/L</fullName>
    </recommendedName>
    <domain>
        <recommendedName>
            <fullName evidence="1">23S rRNA m2G2445 methyltransferase</fullName>
            <ecNumber evidence="1">2.1.1.173</ecNumber>
        </recommendedName>
        <alternativeName>
            <fullName evidence="1">rRNA (guanine-N(2)-)-methyltransferase RlmL</fullName>
        </alternativeName>
    </domain>
    <domain>
        <recommendedName>
            <fullName evidence="1">23S rRNA m7G2069 methyltransferase</fullName>
            <ecNumber evidence="1">2.1.1.264</ecNumber>
        </recommendedName>
        <alternativeName>
            <fullName evidence="1">rRNA (guanine-N(7)-)-methyltransferase RlmK</fullName>
        </alternativeName>
    </domain>
</protein>
<name>RLMKL_SALHS</name>
<organism>
    <name type="scientific">Salmonella heidelberg (strain SL476)</name>
    <dbReference type="NCBI Taxonomy" id="454169"/>
    <lineage>
        <taxon>Bacteria</taxon>
        <taxon>Pseudomonadati</taxon>
        <taxon>Pseudomonadota</taxon>
        <taxon>Gammaproteobacteria</taxon>
        <taxon>Enterobacterales</taxon>
        <taxon>Enterobacteriaceae</taxon>
        <taxon>Salmonella</taxon>
    </lineage>
</organism>
<gene>
    <name evidence="1" type="primary">rlmL</name>
    <name type="ordered locus">SeHA_C1170</name>
</gene>
<dbReference type="EC" id="2.1.1.173" evidence="1"/>
<dbReference type="EC" id="2.1.1.264" evidence="1"/>
<dbReference type="EMBL" id="CP001120">
    <property type="protein sequence ID" value="ACF69678.1"/>
    <property type="molecule type" value="Genomic_DNA"/>
</dbReference>
<dbReference type="SMR" id="B4TDY8"/>
<dbReference type="KEGG" id="seh:SeHA_C1170"/>
<dbReference type="HOGENOM" id="CLU_014042_2_0_6"/>
<dbReference type="Proteomes" id="UP000001866">
    <property type="component" value="Chromosome"/>
</dbReference>
<dbReference type="GO" id="GO:0005737">
    <property type="term" value="C:cytoplasm"/>
    <property type="evidence" value="ECO:0007669"/>
    <property type="project" value="UniProtKB-SubCell"/>
</dbReference>
<dbReference type="GO" id="GO:0052915">
    <property type="term" value="F:23S rRNA (guanine(2445)-N(2))-methyltransferase activity"/>
    <property type="evidence" value="ECO:0007669"/>
    <property type="project" value="UniProtKB-UniRule"/>
</dbReference>
<dbReference type="GO" id="GO:0003723">
    <property type="term" value="F:RNA binding"/>
    <property type="evidence" value="ECO:0007669"/>
    <property type="project" value="UniProtKB-KW"/>
</dbReference>
<dbReference type="GO" id="GO:0070043">
    <property type="term" value="F:rRNA (guanine-N7-)-methyltransferase activity"/>
    <property type="evidence" value="ECO:0007669"/>
    <property type="project" value="UniProtKB-UniRule"/>
</dbReference>
<dbReference type="CDD" id="cd02440">
    <property type="entry name" value="AdoMet_MTases"/>
    <property type="match status" value="2"/>
</dbReference>
<dbReference type="CDD" id="cd11715">
    <property type="entry name" value="THUMP_AdoMetMT"/>
    <property type="match status" value="1"/>
</dbReference>
<dbReference type="FunFam" id="3.30.750.80:FF:000001">
    <property type="entry name" value="Ribosomal RNA large subunit methyltransferase K/L"/>
    <property type="match status" value="1"/>
</dbReference>
<dbReference type="FunFam" id="3.40.50.150:FF:000039">
    <property type="entry name" value="Ribosomal RNA large subunit methyltransferase K/L"/>
    <property type="match status" value="1"/>
</dbReference>
<dbReference type="Gene3D" id="3.30.2130.30">
    <property type="match status" value="1"/>
</dbReference>
<dbReference type="Gene3D" id="3.30.750.80">
    <property type="entry name" value="RNA methyltransferase domain (HRMD) like"/>
    <property type="match status" value="1"/>
</dbReference>
<dbReference type="Gene3D" id="3.40.50.150">
    <property type="entry name" value="Vaccinia Virus protein VP39"/>
    <property type="match status" value="2"/>
</dbReference>
<dbReference type="HAMAP" id="MF_01858">
    <property type="entry name" value="23SrRNA_methyltr_KL"/>
    <property type="match status" value="1"/>
</dbReference>
<dbReference type="InterPro" id="IPR017244">
    <property type="entry name" value="23SrRNA_methyltr_KL"/>
</dbReference>
<dbReference type="InterPro" id="IPR002052">
    <property type="entry name" value="DNA_methylase_N6_adenine_CS"/>
</dbReference>
<dbReference type="InterPro" id="IPR000241">
    <property type="entry name" value="RlmKL-like_Mtase"/>
</dbReference>
<dbReference type="InterPro" id="IPR053943">
    <property type="entry name" value="RlmKL-like_Mtase_CS"/>
</dbReference>
<dbReference type="InterPro" id="IPR054170">
    <property type="entry name" value="RlmL_1st"/>
</dbReference>
<dbReference type="InterPro" id="IPR019614">
    <property type="entry name" value="SAM-dep_methyl-trfase"/>
</dbReference>
<dbReference type="InterPro" id="IPR029063">
    <property type="entry name" value="SAM-dependent_MTases_sf"/>
</dbReference>
<dbReference type="InterPro" id="IPR004114">
    <property type="entry name" value="THUMP_dom"/>
</dbReference>
<dbReference type="NCBIfam" id="NF008748">
    <property type="entry name" value="PRK11783.1"/>
    <property type="match status" value="1"/>
</dbReference>
<dbReference type="PANTHER" id="PTHR47313">
    <property type="entry name" value="RIBOSOMAL RNA LARGE SUBUNIT METHYLTRANSFERASE K/L"/>
    <property type="match status" value="1"/>
</dbReference>
<dbReference type="PANTHER" id="PTHR47313:SF1">
    <property type="entry name" value="RIBOSOMAL RNA LARGE SUBUNIT METHYLTRANSFERASE K_L"/>
    <property type="match status" value="1"/>
</dbReference>
<dbReference type="Pfam" id="PF10672">
    <property type="entry name" value="Methyltrans_SAM"/>
    <property type="match status" value="1"/>
</dbReference>
<dbReference type="Pfam" id="PF22020">
    <property type="entry name" value="RlmL_1st"/>
    <property type="match status" value="1"/>
</dbReference>
<dbReference type="Pfam" id="PF02926">
    <property type="entry name" value="THUMP"/>
    <property type="match status" value="1"/>
</dbReference>
<dbReference type="Pfam" id="PF01170">
    <property type="entry name" value="UPF0020"/>
    <property type="match status" value="1"/>
</dbReference>
<dbReference type="PIRSF" id="PIRSF037618">
    <property type="entry name" value="RNA_Mtase_bacteria_prd"/>
    <property type="match status" value="1"/>
</dbReference>
<dbReference type="PRINTS" id="PR00507">
    <property type="entry name" value="N12N6MTFRASE"/>
</dbReference>
<dbReference type="SMART" id="SM00981">
    <property type="entry name" value="THUMP"/>
    <property type="match status" value="1"/>
</dbReference>
<dbReference type="SUPFAM" id="SSF53335">
    <property type="entry name" value="S-adenosyl-L-methionine-dependent methyltransferases"/>
    <property type="match status" value="2"/>
</dbReference>
<dbReference type="PROSITE" id="PS51165">
    <property type="entry name" value="THUMP"/>
    <property type="match status" value="1"/>
</dbReference>
<dbReference type="PROSITE" id="PS01261">
    <property type="entry name" value="UPF0020"/>
    <property type="match status" value="1"/>
</dbReference>
<keyword id="KW-0963">Cytoplasm</keyword>
<keyword id="KW-0489">Methyltransferase</keyword>
<keyword id="KW-0694">RNA-binding</keyword>
<keyword id="KW-0698">rRNA processing</keyword>
<keyword id="KW-0949">S-adenosyl-L-methionine</keyword>
<keyword id="KW-0808">Transferase</keyword>
<feature type="chain" id="PRO_0000366810" description="Ribosomal RNA large subunit methyltransferase K/L">
    <location>
        <begin position="1"/>
        <end position="702"/>
    </location>
</feature>
<feature type="domain" description="THUMP" evidence="1">
    <location>
        <begin position="43"/>
        <end position="154"/>
    </location>
</feature>
<proteinExistence type="inferred from homology"/>
<reference key="1">
    <citation type="journal article" date="2011" name="J. Bacteriol.">
        <title>Comparative genomics of 28 Salmonella enterica isolates: evidence for CRISPR-mediated adaptive sublineage evolution.</title>
        <authorList>
            <person name="Fricke W.F."/>
            <person name="Mammel M.K."/>
            <person name="McDermott P.F."/>
            <person name="Tartera C."/>
            <person name="White D.G."/>
            <person name="Leclerc J.E."/>
            <person name="Ravel J."/>
            <person name="Cebula T.A."/>
        </authorList>
    </citation>
    <scope>NUCLEOTIDE SEQUENCE [LARGE SCALE GENOMIC DNA]</scope>
    <source>
        <strain>SL476</strain>
    </source>
</reference>
<comment type="function">
    <text evidence="1">Specifically methylates the guanine in position 2445 (m2G2445) and the guanine in position 2069 (m7G2069) of 23S rRNA.</text>
</comment>
<comment type="catalytic activity">
    <reaction evidence="1">
        <text>guanosine(2445) in 23S rRNA + S-adenosyl-L-methionine = N(2)-methylguanosine(2445) in 23S rRNA + S-adenosyl-L-homocysteine + H(+)</text>
        <dbReference type="Rhea" id="RHEA:42740"/>
        <dbReference type="Rhea" id="RHEA-COMP:10215"/>
        <dbReference type="Rhea" id="RHEA-COMP:10216"/>
        <dbReference type="ChEBI" id="CHEBI:15378"/>
        <dbReference type="ChEBI" id="CHEBI:57856"/>
        <dbReference type="ChEBI" id="CHEBI:59789"/>
        <dbReference type="ChEBI" id="CHEBI:74269"/>
        <dbReference type="ChEBI" id="CHEBI:74481"/>
        <dbReference type="EC" id="2.1.1.173"/>
    </reaction>
</comment>
<comment type="catalytic activity">
    <reaction evidence="1">
        <text>guanosine(2069) in 23S rRNA + S-adenosyl-L-methionine = N(2)-methylguanosine(2069) in 23S rRNA + S-adenosyl-L-homocysteine + H(+)</text>
        <dbReference type="Rhea" id="RHEA:43772"/>
        <dbReference type="Rhea" id="RHEA-COMP:10688"/>
        <dbReference type="Rhea" id="RHEA-COMP:10689"/>
        <dbReference type="ChEBI" id="CHEBI:15378"/>
        <dbReference type="ChEBI" id="CHEBI:57856"/>
        <dbReference type="ChEBI" id="CHEBI:59789"/>
        <dbReference type="ChEBI" id="CHEBI:74269"/>
        <dbReference type="ChEBI" id="CHEBI:74481"/>
        <dbReference type="EC" id="2.1.1.264"/>
    </reaction>
</comment>
<comment type="subcellular location">
    <subcellularLocation>
        <location evidence="1">Cytoplasm</location>
    </subcellularLocation>
</comment>
<comment type="similarity">
    <text evidence="1">Belongs to the methyltransferase superfamily. RlmKL family.</text>
</comment>
<accession>B4TDY8</accession>
<sequence length="702" mass="78849">MNSLFASTARGLEELLKTELEKLGAVGCQVVQGGVHFQGDTRLIYQSLMWSRLASRIILPMGECKVYSDLDLYLGVQAINWTEIFNPGATFAVHFSGLNDTIRNSQYGAMKVKDAIVDAFTRKNLPRPNVDRESPDLRINVWLNKETASIALDLSGDGLHLRGYRDRTGLAPIKETLAAAIVMRSGWQPGTPLLDPMCGSGTLLIEAAMWATDRAPGLHRGHWGFSGWAQHDETIWQEVKAEAQTRARKGLAEYSSHFYGSDSDARVIERARSNARRAGIGELITFEVKDVAQLSNPLPKGPYGTVISNPPYGERLDSEPALIALHSLLGRTMKNQFGGWNLSLFSASPDLLGSLQLRADKQFKAKNGPLDCVQKNYHIAETTADSKPATVAEDYANRLRKNLKKLEKWARQEGIECYRLYDADLPEYNVAVDRYGDWAVIQEYAPPKTVDAQKARQRLFDIIAATLSVLGIPPNKLVLKTRERQKGKNQYQKMSEKGEFLEVSEYNARLWVNLTDYLDTGLFLDHRIARRMLGEMSKGKDFLNLFSYTGSASVHAGLGGARSTTTVDMSRTYLEWAERNLRLNGLSGRAHRLIQADCLGWLREANEQFDLIFIDPPTFSNSKRMEESFDVQRDHVALMKDLKRLLRKGGTIMFSNNKRGFRMDLEGLAELGLTAQEITQKTLSPDFARNRQIHNCWLIRAA</sequence>
<evidence type="ECO:0000255" key="1">
    <source>
        <dbReference type="HAMAP-Rule" id="MF_01858"/>
    </source>
</evidence>